<keyword id="KW-0249">Electron transport</keyword>
<keyword id="KW-0349">Heme</keyword>
<keyword id="KW-0408">Iron</keyword>
<keyword id="KW-0472">Membrane</keyword>
<keyword id="KW-0479">Metal-binding</keyword>
<keyword id="KW-0496">Mitochondrion</keyword>
<keyword id="KW-0999">Mitochondrion inner membrane</keyword>
<keyword id="KW-0679">Respiratory chain</keyword>
<keyword id="KW-0812">Transmembrane</keyword>
<keyword id="KW-1133">Transmembrane helix</keyword>
<keyword id="KW-0813">Transport</keyword>
<keyword id="KW-0830">Ubiquinone</keyword>
<organism>
    <name type="scientific">Tarsipes rostratus</name>
    <name type="common">Honey possum</name>
    <dbReference type="NCBI Taxonomy" id="38632"/>
    <lineage>
        <taxon>Eukaryota</taxon>
        <taxon>Metazoa</taxon>
        <taxon>Chordata</taxon>
        <taxon>Craniata</taxon>
        <taxon>Vertebrata</taxon>
        <taxon>Euteleostomi</taxon>
        <taxon>Mammalia</taxon>
        <taxon>Metatheria</taxon>
        <taxon>Diprotodontia</taxon>
        <taxon>Tarsipedidae</taxon>
        <taxon>Tarsipes</taxon>
    </lineage>
</organism>
<comment type="function">
    <text evidence="2">Component of the ubiquinol-cytochrome c reductase complex (complex III or cytochrome b-c1 complex) that is part of the mitochondrial respiratory chain. The b-c1 complex mediates electron transfer from ubiquinol to cytochrome c. Contributes to the generation of a proton gradient across the mitochondrial membrane that is then used for ATP synthesis.</text>
</comment>
<comment type="cofactor">
    <cofactor evidence="2">
        <name>heme b</name>
        <dbReference type="ChEBI" id="CHEBI:60344"/>
    </cofactor>
    <text evidence="2">Binds 2 heme b groups non-covalently.</text>
</comment>
<comment type="subunit">
    <text evidence="2">The cytochrome bc1 complex contains 11 subunits: 3 respiratory subunits (MT-CYB, CYC1 and UQCRFS1), 2 core proteins (UQCRC1 and UQCRC2) and 6 low-molecular weight proteins (UQCRH/QCR6, UQCRB/QCR7, UQCRQ/QCR8, UQCR10/QCR9, UQCR11/QCR10 and a cleavage product of UQCRFS1). This cytochrome bc1 complex then forms a dimer.</text>
</comment>
<comment type="subcellular location">
    <subcellularLocation>
        <location evidence="2">Mitochondrion inner membrane</location>
        <topology evidence="2">Multi-pass membrane protein</topology>
    </subcellularLocation>
</comment>
<comment type="miscellaneous">
    <text evidence="1">Heme 1 (or BL or b562) is low-potential and absorbs at about 562 nm, and heme 2 (or BH or b566) is high-potential and absorbs at about 566 nm.</text>
</comment>
<comment type="similarity">
    <text evidence="3 4">Belongs to the cytochrome b family.</text>
</comment>
<comment type="caution">
    <text evidence="2">The full-length protein contains only eight transmembrane helices, not nine as predicted by bioinformatics tools.</text>
</comment>
<sequence>MINIRKTHPLMKIINHSFIDLPAPSNISAWWNFGSLLGVCLTIQILTGLFLAMHYTSDTLTAFSSVAHICRDVNYGWLIRNLHANGASMFFMCLFLHVGRGIYYGSYLYKETWNIGVILLLTVMATAFVGYVLPWGQMSFWGATVITNLLSAIPYIGTTLVEWIWGGFSVDKATLTRFFAFHFILPFIIMAMVIVHLLFLHETGSNNPTGIDPNSDKIPFHPYYTIKDILGLMFMLLTLLLLALFSPDMLGDPDNFTPANPLNTPPHIKPEWYFLFAYAILRSIPNKLGGVLALLASILVLLIIPLLHTSNQRSLIFRPISQMLFWMLTANLFILTWIGGQPVEQPYIIIGQLASIMYFLLIIILIPAASILENYLLNPK</sequence>
<name>CYB_TARRO</name>
<evidence type="ECO:0000250" key="1"/>
<evidence type="ECO:0000250" key="2">
    <source>
        <dbReference type="UniProtKB" id="P00157"/>
    </source>
</evidence>
<evidence type="ECO:0000255" key="3">
    <source>
        <dbReference type="PROSITE-ProRule" id="PRU00967"/>
    </source>
</evidence>
<evidence type="ECO:0000255" key="4">
    <source>
        <dbReference type="PROSITE-ProRule" id="PRU00968"/>
    </source>
</evidence>
<gene>
    <name type="primary">MT-CYB</name>
    <name type="synonym">COB</name>
    <name type="synonym">CYTB</name>
    <name type="synonym">MTCYB</name>
</gene>
<dbReference type="EMBL" id="AJ639868">
    <property type="protein sequence ID" value="CAG26380.1"/>
    <property type="molecule type" value="Genomic_DNA"/>
</dbReference>
<dbReference type="RefSeq" id="YP_161207.1">
    <property type="nucleotide sequence ID" value="NC_006518.1"/>
</dbReference>
<dbReference type="SMR" id="Q5QS67"/>
<dbReference type="GeneID" id="3187143"/>
<dbReference type="CTD" id="4519"/>
<dbReference type="GO" id="GO:0005743">
    <property type="term" value="C:mitochondrial inner membrane"/>
    <property type="evidence" value="ECO:0007669"/>
    <property type="project" value="UniProtKB-SubCell"/>
</dbReference>
<dbReference type="GO" id="GO:0045275">
    <property type="term" value="C:respiratory chain complex III"/>
    <property type="evidence" value="ECO:0007669"/>
    <property type="project" value="InterPro"/>
</dbReference>
<dbReference type="GO" id="GO:0046872">
    <property type="term" value="F:metal ion binding"/>
    <property type="evidence" value="ECO:0007669"/>
    <property type="project" value="UniProtKB-KW"/>
</dbReference>
<dbReference type="GO" id="GO:0008121">
    <property type="term" value="F:ubiquinol-cytochrome-c reductase activity"/>
    <property type="evidence" value="ECO:0007669"/>
    <property type="project" value="InterPro"/>
</dbReference>
<dbReference type="GO" id="GO:0006122">
    <property type="term" value="P:mitochondrial electron transport, ubiquinol to cytochrome c"/>
    <property type="evidence" value="ECO:0007669"/>
    <property type="project" value="TreeGrafter"/>
</dbReference>
<dbReference type="CDD" id="cd00290">
    <property type="entry name" value="cytochrome_b_C"/>
    <property type="match status" value="1"/>
</dbReference>
<dbReference type="CDD" id="cd00284">
    <property type="entry name" value="Cytochrome_b_N"/>
    <property type="match status" value="1"/>
</dbReference>
<dbReference type="FunFam" id="1.20.810.10:FF:000002">
    <property type="entry name" value="Cytochrome b"/>
    <property type="match status" value="1"/>
</dbReference>
<dbReference type="Gene3D" id="1.20.810.10">
    <property type="entry name" value="Cytochrome Bc1 Complex, Chain C"/>
    <property type="match status" value="1"/>
</dbReference>
<dbReference type="InterPro" id="IPR005798">
    <property type="entry name" value="Cyt_b/b6_C"/>
</dbReference>
<dbReference type="InterPro" id="IPR036150">
    <property type="entry name" value="Cyt_b/b6_C_sf"/>
</dbReference>
<dbReference type="InterPro" id="IPR005797">
    <property type="entry name" value="Cyt_b/b6_N"/>
</dbReference>
<dbReference type="InterPro" id="IPR027387">
    <property type="entry name" value="Cytb/b6-like_sf"/>
</dbReference>
<dbReference type="InterPro" id="IPR030689">
    <property type="entry name" value="Cytochrome_b"/>
</dbReference>
<dbReference type="InterPro" id="IPR048260">
    <property type="entry name" value="Cytochrome_b_C_euk/bac"/>
</dbReference>
<dbReference type="InterPro" id="IPR048259">
    <property type="entry name" value="Cytochrome_b_N_euk/bac"/>
</dbReference>
<dbReference type="InterPro" id="IPR016174">
    <property type="entry name" value="Di-haem_cyt_TM"/>
</dbReference>
<dbReference type="PANTHER" id="PTHR19271">
    <property type="entry name" value="CYTOCHROME B"/>
    <property type="match status" value="1"/>
</dbReference>
<dbReference type="PANTHER" id="PTHR19271:SF16">
    <property type="entry name" value="CYTOCHROME B"/>
    <property type="match status" value="1"/>
</dbReference>
<dbReference type="Pfam" id="PF00032">
    <property type="entry name" value="Cytochrom_B_C"/>
    <property type="match status" value="1"/>
</dbReference>
<dbReference type="Pfam" id="PF00033">
    <property type="entry name" value="Cytochrome_B"/>
    <property type="match status" value="1"/>
</dbReference>
<dbReference type="PIRSF" id="PIRSF038885">
    <property type="entry name" value="COB"/>
    <property type="match status" value="1"/>
</dbReference>
<dbReference type="SUPFAM" id="SSF81648">
    <property type="entry name" value="a domain/subunit of cytochrome bc1 complex (Ubiquinol-cytochrome c reductase)"/>
    <property type="match status" value="1"/>
</dbReference>
<dbReference type="SUPFAM" id="SSF81342">
    <property type="entry name" value="Transmembrane di-heme cytochromes"/>
    <property type="match status" value="1"/>
</dbReference>
<dbReference type="PROSITE" id="PS51003">
    <property type="entry name" value="CYTB_CTER"/>
    <property type="match status" value="1"/>
</dbReference>
<dbReference type="PROSITE" id="PS51002">
    <property type="entry name" value="CYTB_NTER"/>
    <property type="match status" value="1"/>
</dbReference>
<protein>
    <recommendedName>
        <fullName>Cytochrome b</fullName>
    </recommendedName>
    <alternativeName>
        <fullName>Complex III subunit 3</fullName>
    </alternativeName>
    <alternativeName>
        <fullName>Complex III subunit III</fullName>
    </alternativeName>
    <alternativeName>
        <fullName>Cytochrome b-c1 complex subunit 3</fullName>
    </alternativeName>
    <alternativeName>
        <fullName>Ubiquinol-cytochrome-c reductase complex cytochrome b subunit</fullName>
    </alternativeName>
</protein>
<proteinExistence type="inferred from homology"/>
<reference key="1">
    <citation type="journal article" date="2004" name="Gene">
        <title>Marsupial relationships and a timeline for marsupial radiation in South Gondwana.</title>
        <authorList>
            <person name="Nilsson M.A."/>
            <person name="Arnason U."/>
            <person name="Spencer P.B.S."/>
            <person name="Janke A."/>
        </authorList>
    </citation>
    <scope>NUCLEOTIDE SEQUENCE [GENOMIC DNA]</scope>
    <source>
        <tissue>Liver</tissue>
    </source>
</reference>
<geneLocation type="mitochondrion"/>
<feature type="chain" id="PRO_0000254767" description="Cytochrome b">
    <location>
        <begin position="1"/>
        <end position="380"/>
    </location>
</feature>
<feature type="transmembrane region" description="Helical" evidence="2">
    <location>
        <begin position="33"/>
        <end position="53"/>
    </location>
</feature>
<feature type="transmembrane region" description="Helical" evidence="2">
    <location>
        <begin position="77"/>
        <end position="98"/>
    </location>
</feature>
<feature type="transmembrane region" description="Helical" evidence="2">
    <location>
        <begin position="113"/>
        <end position="133"/>
    </location>
</feature>
<feature type="transmembrane region" description="Helical" evidence="2">
    <location>
        <begin position="178"/>
        <end position="198"/>
    </location>
</feature>
<feature type="transmembrane region" description="Helical" evidence="2">
    <location>
        <begin position="226"/>
        <end position="246"/>
    </location>
</feature>
<feature type="transmembrane region" description="Helical" evidence="2">
    <location>
        <begin position="288"/>
        <end position="308"/>
    </location>
</feature>
<feature type="transmembrane region" description="Helical" evidence="2">
    <location>
        <begin position="320"/>
        <end position="340"/>
    </location>
</feature>
<feature type="transmembrane region" description="Helical" evidence="2">
    <location>
        <begin position="347"/>
        <end position="367"/>
    </location>
</feature>
<feature type="binding site" description="axial binding residue" evidence="2">
    <location>
        <position position="83"/>
    </location>
    <ligand>
        <name>heme b</name>
        <dbReference type="ChEBI" id="CHEBI:60344"/>
        <label>b562</label>
    </ligand>
    <ligandPart>
        <name>Fe</name>
        <dbReference type="ChEBI" id="CHEBI:18248"/>
    </ligandPart>
</feature>
<feature type="binding site" description="axial binding residue" evidence="2">
    <location>
        <position position="97"/>
    </location>
    <ligand>
        <name>heme b</name>
        <dbReference type="ChEBI" id="CHEBI:60344"/>
        <label>b566</label>
    </ligand>
    <ligandPart>
        <name>Fe</name>
        <dbReference type="ChEBI" id="CHEBI:18248"/>
    </ligandPart>
</feature>
<feature type="binding site" description="axial binding residue" evidence="2">
    <location>
        <position position="182"/>
    </location>
    <ligand>
        <name>heme b</name>
        <dbReference type="ChEBI" id="CHEBI:60344"/>
        <label>b562</label>
    </ligand>
    <ligandPart>
        <name>Fe</name>
        <dbReference type="ChEBI" id="CHEBI:18248"/>
    </ligandPart>
</feature>
<feature type="binding site" description="axial binding residue" evidence="2">
    <location>
        <position position="196"/>
    </location>
    <ligand>
        <name>heme b</name>
        <dbReference type="ChEBI" id="CHEBI:60344"/>
        <label>b566</label>
    </ligand>
    <ligandPart>
        <name>Fe</name>
        <dbReference type="ChEBI" id="CHEBI:18248"/>
    </ligandPart>
</feature>
<feature type="binding site" evidence="2">
    <location>
        <position position="201"/>
    </location>
    <ligand>
        <name>a ubiquinone</name>
        <dbReference type="ChEBI" id="CHEBI:16389"/>
    </ligand>
</feature>
<accession>Q5QS67</accession>